<sequence>MDSIKKNTINRINGLPINHNNLSKTSIISMDDDYNSNSSFYSTNNSILNSVTKNSNYLNNNNNNNNNNNNNNNISISNCNNNNTNNKINEQLKTFNNIFEEKGEFLKEEIDNKFNDIISLMNQSKNQLFLSLNDIDSLYDLSPLSTTSTITLENNNNNNNNLIKFKLFNNDSIKKYILPVSSKTIKFKQRQILIEQQEFNEKHNQQKHLLELQRQQVLSDQQNQFQEQHKQQLSLKQQELEAIQQDTNKVKQQLIETHDKLLIEKEKQFKQDLNSLELNLQNKFTNEYQSKEQEFNKKLEQQQQQLEKQFQQTKELLIVQETLTLKSKLTTEFQEQLKTHQDQINKQELLLKQQEYQLFLKQQEISSIQKQHQDDLSSLKSKLSSDQDQIKKQLLQQESDLLKKQQELLLKQQELDIQSKQLKEEQEKQQQQQEKQQEKQQQQQPVVVPVKPTTSTVVSATTATLIKAPIVSTTTVSTATVSKLVTNGIAKPTPLTTMKQTVTAVPTLMDNKTRLKKLVPTATTTTTKEENNKEYDKMMQELDTQPNNSNLKNLNEKKLETLKQQLTFDDSVSFSNGNDESSINLSKYLEETNKSVENTFDIMSNTLKRKNEPIQQPSSSSSQLSSSQQPSSSSSSSSSSIGLKKRLSDDKTTIVTSKPTNKVQPQSLNSNINNNVVPPSPVAAIANKLKKQQELEKLKLEEEERLRKKQEEQLAKREVEKEQERLEKKKKNDEKRKKVEENQQQRILEEEKKKKEAEDRELARKHKEDSDKKKREEEEDAKKRIQERFRETQEQERKREEFKKQQQEQELARIKKEKLQQEKLQQEKEKQEKQKQQQQQQEEEQQKKKTVQTILPTPQTPSRSANNNYDDAANTASATKAKYALSSILSMVFGATKSPHFKPSTSQDDQDDDDCEDYDGTDENSENEAKGEYQDDSDQEIEEQFENDSDESMASTESNGDIYFNKNKNSNNSNNNNDVNQSRKDKSIVFDSDSLNRNHNDSNNSSEEEEPERDPVFLTPLPKILSNMKNNNNNNTYSNSPVIKGLSPPSSVSDYSPSSESNDCFSPLTPTNNNKINNNKINNNNSNNNSFNNSNSYRGLSPAQIIESHTPKCINRSGESKTSPFLTIRNTPSPLKNSPIKFNMSSASSLSSFDSDNDSDYNDNDIDDGEILGNPNENFTTPLKNQENNNNNNSNNSNTQYPIITSPPSNEDGDENYYFEEEEIDYEYDKRVPDWAKNHNLDNSLKQQRFYDPDRIFSMIGPVYLYEIFPKQDLGGKIKDFSKVKRNLSSDWSRDCNTEKEDISYKKNMGFTNPIIVNKK</sequence>
<gene>
    <name type="primary">icpA</name>
    <name type="synonym">Incenp</name>
    <name type="ORF">DDB_G0267690</name>
</gene>
<comment type="function">
    <text evidence="3">Chromosomal passenger protein that seems to be required for chromosome segregation and the onset of cytokinesis during mitosis. Plays a key role in the abscission of daughter cells at the end of cytokinesis and in the establishment or maintenance of a bipolar spindle.</text>
</comment>
<comment type="subunit">
    <text evidence="3">Interacts with aurK.</text>
</comment>
<comment type="interaction">
    <interactant intactId="EBI-922339">
        <id>Q55GF9</id>
    </interactant>
    <interactant intactId="EBI-2939723">
        <id>Q54WX4</id>
        <label>aurK</label>
    </interactant>
    <organismsDiffer>false</organismsDiffer>
    <experiments>4</experiments>
</comment>
<comment type="subcellular location">
    <subcellularLocation>
        <location evidence="3">Chromosome</location>
        <location evidence="3">Centromere</location>
    </subcellularLocation>
    <subcellularLocation>
        <location evidence="3">Cytoplasm</location>
        <location evidence="3">Cytoskeleton</location>
        <location evidence="3">Spindle</location>
    </subcellularLocation>
    <subcellularLocation>
        <location evidence="3">Nucleus</location>
    </subcellularLocation>
    <subcellularLocation>
        <location evidence="3">Cleavage furrow</location>
    </subcellularLocation>
    <text>During mitosis, found in the spindle midzone and poles. During cytokinesis, found in the cleavage furrow. During prometaphase, found concentrated adjacent to the condensed chromosome. During metaphase, found concentrated in the middle of the spindle surrounded by chromosomes. After the onset of anaphase, moved to the spindle midzone and spindle poles where it remains through late telophase. After initiation of the cleavage furrow, found increasingly concentrated at the furrow area, especially at the cortex area. By the abscission stage of cytokinesis, found highly concentrated in the thin cytoplasmic bridge connecting the two daughter cells.</text>
</comment>
<comment type="disruption phenotype">
    <text evidence="3">Null cells divide much more slowly than wild type, have a high percentage of mutant cells, become multinucleate and have very enlarged nuclei.</text>
</comment>
<comment type="similarity">
    <text evidence="4">Belongs to the INCENP family.</text>
</comment>
<name>ICPA_DICDI</name>
<protein>
    <recommendedName>
        <fullName>Inner centromere protein A</fullName>
    </recommendedName>
    <alternativeName>
        <fullName>DdINCENP</fullName>
    </alternativeName>
</protein>
<dbReference type="EMBL" id="AAFI02000003">
    <property type="protein sequence ID" value="EAL73298.1"/>
    <property type="molecule type" value="Genomic_DNA"/>
</dbReference>
<dbReference type="RefSeq" id="XP_647225.1">
    <property type="nucleotide sequence ID" value="XM_642133.1"/>
</dbReference>
<dbReference type="SMR" id="Q55GF9"/>
<dbReference type="FunCoup" id="Q55GF9">
    <property type="interactions" value="692"/>
</dbReference>
<dbReference type="IntAct" id="Q55GF9">
    <property type="interactions" value="3"/>
</dbReference>
<dbReference type="STRING" id="44689.Q55GF9"/>
<dbReference type="GlyGen" id="Q55GF9">
    <property type="glycosylation" value="1 site"/>
</dbReference>
<dbReference type="PaxDb" id="44689-DDB0232941"/>
<dbReference type="EnsemblProtists" id="EAL73298">
    <property type="protein sequence ID" value="EAL73298"/>
    <property type="gene ID" value="DDB_G0267690"/>
</dbReference>
<dbReference type="GeneID" id="8616029"/>
<dbReference type="KEGG" id="ddi:DDB_G0267690"/>
<dbReference type="dictyBase" id="DDB_G0267690">
    <property type="gene designation" value="icpA"/>
</dbReference>
<dbReference type="VEuPathDB" id="AmoebaDB:DDB_G0267690"/>
<dbReference type="eggNOG" id="ENOG502RC5R">
    <property type="taxonomic scope" value="Eukaryota"/>
</dbReference>
<dbReference type="HOGENOM" id="CLU_259973_0_0_1"/>
<dbReference type="InParanoid" id="Q55GF9"/>
<dbReference type="OMA" id="KHNQQKH"/>
<dbReference type="PRO" id="PR:Q55GF9"/>
<dbReference type="Proteomes" id="UP000002195">
    <property type="component" value="Chromosome 1"/>
</dbReference>
<dbReference type="GO" id="GO:0005813">
    <property type="term" value="C:centrosome"/>
    <property type="evidence" value="ECO:0000314"/>
    <property type="project" value="dictyBase"/>
</dbReference>
<dbReference type="GO" id="GO:0032133">
    <property type="term" value="C:chromosome passenger complex"/>
    <property type="evidence" value="ECO:0000314"/>
    <property type="project" value="dictyBase"/>
</dbReference>
<dbReference type="GO" id="GO:0000775">
    <property type="term" value="C:chromosome, centromeric region"/>
    <property type="evidence" value="ECO:0007669"/>
    <property type="project" value="UniProtKB-SubCell"/>
</dbReference>
<dbReference type="GO" id="GO:0032154">
    <property type="term" value="C:cleavage furrow"/>
    <property type="evidence" value="ECO:0000314"/>
    <property type="project" value="dictyBase"/>
</dbReference>
<dbReference type="GO" id="GO:0005737">
    <property type="term" value="C:cytoplasm"/>
    <property type="evidence" value="ECO:0007669"/>
    <property type="project" value="UniProtKB-KW"/>
</dbReference>
<dbReference type="GO" id="GO:0005634">
    <property type="term" value="C:nucleus"/>
    <property type="evidence" value="ECO:0007669"/>
    <property type="project" value="UniProtKB-SubCell"/>
</dbReference>
<dbReference type="GO" id="GO:0005819">
    <property type="term" value="C:spindle"/>
    <property type="evidence" value="ECO:0007669"/>
    <property type="project" value="UniProtKB-SubCell"/>
</dbReference>
<dbReference type="GO" id="GO:0007059">
    <property type="term" value="P:chromosome segregation"/>
    <property type="evidence" value="ECO:0000315"/>
    <property type="project" value="dictyBase"/>
</dbReference>
<dbReference type="GO" id="GO:0000278">
    <property type="term" value="P:mitotic cell cycle"/>
    <property type="evidence" value="ECO:0000315"/>
    <property type="project" value="dictyBase"/>
</dbReference>
<dbReference type="GO" id="GO:0000281">
    <property type="term" value="P:mitotic cytokinesis"/>
    <property type="evidence" value="ECO:0000315"/>
    <property type="project" value="dictyBase"/>
</dbReference>
<dbReference type="GO" id="GO:0007052">
    <property type="term" value="P:mitotic spindle organization"/>
    <property type="evidence" value="ECO:0000315"/>
    <property type="project" value="dictyBase"/>
</dbReference>
<dbReference type="GO" id="GO:0008104">
    <property type="term" value="P:protein localization"/>
    <property type="evidence" value="ECO:0000315"/>
    <property type="project" value="dictyBase"/>
</dbReference>
<dbReference type="GO" id="GO:1905345">
    <property type="term" value="P:protein localization to cleavage furrow"/>
    <property type="evidence" value="ECO:0000315"/>
    <property type="project" value="dictyBase"/>
</dbReference>
<dbReference type="GO" id="GO:0009612">
    <property type="term" value="P:response to mechanical stimulus"/>
    <property type="evidence" value="ECO:0000314"/>
    <property type="project" value="dictyBase"/>
</dbReference>
<dbReference type="InterPro" id="IPR005635">
    <property type="entry name" value="Inner_centromere_prot_ARK-bd"/>
</dbReference>
<dbReference type="Pfam" id="PF03941">
    <property type="entry name" value="INCENP_ARK-bind"/>
    <property type="match status" value="1"/>
</dbReference>
<reference key="1">
    <citation type="journal article" date="2005" name="Nature">
        <title>The genome of the social amoeba Dictyostelium discoideum.</title>
        <authorList>
            <person name="Eichinger L."/>
            <person name="Pachebat J.A."/>
            <person name="Gloeckner G."/>
            <person name="Rajandream M.A."/>
            <person name="Sucgang R."/>
            <person name="Berriman M."/>
            <person name="Song J."/>
            <person name="Olsen R."/>
            <person name="Szafranski K."/>
            <person name="Xu Q."/>
            <person name="Tunggal B."/>
            <person name="Kummerfeld S."/>
            <person name="Madera M."/>
            <person name="Konfortov B.A."/>
            <person name="Rivero F."/>
            <person name="Bankier A.T."/>
            <person name="Lehmann R."/>
            <person name="Hamlin N."/>
            <person name="Davies R."/>
            <person name="Gaudet P."/>
            <person name="Fey P."/>
            <person name="Pilcher K."/>
            <person name="Chen G."/>
            <person name="Saunders D."/>
            <person name="Sodergren E.J."/>
            <person name="Davis P."/>
            <person name="Kerhornou A."/>
            <person name="Nie X."/>
            <person name="Hall N."/>
            <person name="Anjard C."/>
            <person name="Hemphill L."/>
            <person name="Bason N."/>
            <person name="Farbrother P."/>
            <person name="Desany B."/>
            <person name="Just E."/>
            <person name="Morio T."/>
            <person name="Rost R."/>
            <person name="Churcher C.M."/>
            <person name="Cooper J."/>
            <person name="Haydock S."/>
            <person name="van Driessche N."/>
            <person name="Cronin A."/>
            <person name="Goodhead I."/>
            <person name="Muzny D.M."/>
            <person name="Mourier T."/>
            <person name="Pain A."/>
            <person name="Lu M."/>
            <person name="Harper D."/>
            <person name="Lindsay R."/>
            <person name="Hauser H."/>
            <person name="James K.D."/>
            <person name="Quiles M."/>
            <person name="Madan Babu M."/>
            <person name="Saito T."/>
            <person name="Buchrieser C."/>
            <person name="Wardroper A."/>
            <person name="Felder M."/>
            <person name="Thangavelu M."/>
            <person name="Johnson D."/>
            <person name="Knights A."/>
            <person name="Loulseged H."/>
            <person name="Mungall K.L."/>
            <person name="Oliver K."/>
            <person name="Price C."/>
            <person name="Quail M.A."/>
            <person name="Urushihara H."/>
            <person name="Hernandez J."/>
            <person name="Rabbinowitsch E."/>
            <person name="Steffen D."/>
            <person name="Sanders M."/>
            <person name="Ma J."/>
            <person name="Kohara Y."/>
            <person name="Sharp S."/>
            <person name="Simmonds M.N."/>
            <person name="Spiegler S."/>
            <person name="Tivey A."/>
            <person name="Sugano S."/>
            <person name="White B."/>
            <person name="Walker D."/>
            <person name="Woodward J.R."/>
            <person name="Winckler T."/>
            <person name="Tanaka Y."/>
            <person name="Shaulsky G."/>
            <person name="Schleicher M."/>
            <person name="Weinstock G.M."/>
            <person name="Rosenthal A."/>
            <person name="Cox E.C."/>
            <person name="Chisholm R.L."/>
            <person name="Gibbs R.A."/>
            <person name="Loomis W.F."/>
            <person name="Platzer M."/>
            <person name="Kay R.R."/>
            <person name="Williams J.G."/>
            <person name="Dear P.H."/>
            <person name="Noegel A.A."/>
            <person name="Barrell B.G."/>
            <person name="Kuspa A."/>
        </authorList>
    </citation>
    <scope>NUCLEOTIDE SEQUENCE [LARGE SCALE GENOMIC DNA]</scope>
    <source>
        <strain>AX4</strain>
    </source>
</reference>
<reference key="2">
    <citation type="journal article" date="2006" name="J. Proteome Res.">
        <title>Identification of novel centrosomal proteins in Dictyostelium discoideum by comparative proteomic approaches.</title>
        <authorList>
            <person name="Reinders Y."/>
            <person name="Schulz I."/>
            <person name="Graef R."/>
            <person name="Sickmann A."/>
        </authorList>
    </citation>
    <scope>IDENTIFICATION BY MASS SPECTROMETRY [LARGE SCALE ANALYSIS]</scope>
</reference>
<reference key="3">
    <citation type="journal article" date="2006" name="Mol. Biol. Cell">
        <title>Contractile ring-independent localization of DdINCENP, a protein important for spindle stability and cytokinesis.</title>
        <authorList>
            <person name="Chen Q."/>
            <person name="Li H."/>
            <person name="De Lozanne A."/>
        </authorList>
    </citation>
    <scope>FUNCTION</scope>
    <scope>DISRUPTION PHENOTYPE</scope>
    <scope>SUBCELLULAR LOCATION</scope>
    <scope>INTERACTION WITH AURK</scope>
</reference>
<proteinExistence type="evidence at protein level"/>
<organism>
    <name type="scientific">Dictyostelium discoideum</name>
    <name type="common">Social amoeba</name>
    <dbReference type="NCBI Taxonomy" id="44689"/>
    <lineage>
        <taxon>Eukaryota</taxon>
        <taxon>Amoebozoa</taxon>
        <taxon>Evosea</taxon>
        <taxon>Eumycetozoa</taxon>
        <taxon>Dictyostelia</taxon>
        <taxon>Dictyosteliales</taxon>
        <taxon>Dictyosteliaceae</taxon>
        <taxon>Dictyostelium</taxon>
    </lineage>
</organism>
<accession>Q55GF9</accession>
<evidence type="ECO:0000255" key="1"/>
<evidence type="ECO:0000256" key="2">
    <source>
        <dbReference type="SAM" id="MobiDB-lite"/>
    </source>
</evidence>
<evidence type="ECO:0000269" key="3">
    <source>
    </source>
</evidence>
<evidence type="ECO:0000305" key="4"/>
<keyword id="KW-0137">Centromere</keyword>
<keyword id="KW-0158">Chromosome</keyword>
<keyword id="KW-0175">Coiled coil</keyword>
<keyword id="KW-0963">Cytoplasm</keyword>
<keyword id="KW-0206">Cytoskeleton</keyword>
<keyword id="KW-0539">Nucleus</keyword>
<keyword id="KW-1185">Reference proteome</keyword>
<feature type="chain" id="PRO_0000362003" description="Inner centromere protein A">
    <location>
        <begin position="1"/>
        <end position="1320"/>
    </location>
</feature>
<feature type="region of interest" description="Disordered" evidence="2">
    <location>
        <begin position="53"/>
        <end position="75"/>
    </location>
</feature>
<feature type="region of interest" description="Disordered" evidence="2">
    <location>
        <begin position="426"/>
        <end position="447"/>
    </location>
</feature>
<feature type="region of interest" description="Disordered" evidence="2">
    <location>
        <begin position="611"/>
        <end position="679"/>
    </location>
</feature>
<feature type="region of interest" description="Disordered" evidence="2">
    <location>
        <begin position="701"/>
        <end position="877"/>
    </location>
</feature>
<feature type="region of interest" description="Disordered" evidence="2">
    <location>
        <begin position="896"/>
        <end position="1215"/>
    </location>
</feature>
<feature type="coiled-coil region" evidence="1">
    <location>
        <begin position="221"/>
        <end position="444"/>
    </location>
</feature>
<feature type="coiled-coil region" evidence="1">
    <location>
        <begin position="683"/>
        <end position="855"/>
    </location>
</feature>
<feature type="compositionally biased region" description="Low complexity" evidence="2">
    <location>
        <begin position="54"/>
        <end position="75"/>
    </location>
</feature>
<feature type="compositionally biased region" description="Low complexity" evidence="2">
    <location>
        <begin position="429"/>
        <end position="447"/>
    </location>
</feature>
<feature type="compositionally biased region" description="Low complexity" evidence="2">
    <location>
        <begin position="615"/>
        <end position="640"/>
    </location>
</feature>
<feature type="compositionally biased region" description="Polar residues" evidence="2">
    <location>
        <begin position="653"/>
        <end position="668"/>
    </location>
</feature>
<feature type="compositionally biased region" description="Low complexity" evidence="2">
    <location>
        <begin position="669"/>
        <end position="679"/>
    </location>
</feature>
<feature type="compositionally biased region" description="Basic and acidic residues" evidence="2">
    <location>
        <begin position="701"/>
        <end position="835"/>
    </location>
</feature>
<feature type="compositionally biased region" description="Polar residues" evidence="2">
    <location>
        <begin position="851"/>
        <end position="863"/>
    </location>
</feature>
<feature type="compositionally biased region" description="Low complexity" evidence="2">
    <location>
        <begin position="864"/>
        <end position="877"/>
    </location>
</feature>
<feature type="compositionally biased region" description="Acidic residues" evidence="2">
    <location>
        <begin position="908"/>
        <end position="926"/>
    </location>
</feature>
<feature type="compositionally biased region" description="Acidic residues" evidence="2">
    <location>
        <begin position="934"/>
        <end position="951"/>
    </location>
</feature>
<feature type="compositionally biased region" description="Low complexity" evidence="2">
    <location>
        <begin position="965"/>
        <end position="977"/>
    </location>
</feature>
<feature type="compositionally biased region" description="Basic and acidic residues" evidence="2">
    <location>
        <begin position="981"/>
        <end position="1000"/>
    </location>
</feature>
<feature type="compositionally biased region" description="Low complexity" evidence="2">
    <location>
        <begin position="1026"/>
        <end position="1040"/>
    </location>
</feature>
<feature type="compositionally biased region" description="Low complexity" evidence="2">
    <location>
        <begin position="1047"/>
        <end position="1061"/>
    </location>
</feature>
<feature type="compositionally biased region" description="Polar residues" evidence="2">
    <location>
        <begin position="1062"/>
        <end position="1071"/>
    </location>
</feature>
<feature type="compositionally biased region" description="Low complexity" evidence="2">
    <location>
        <begin position="1072"/>
        <end position="1096"/>
    </location>
</feature>
<feature type="compositionally biased region" description="Polar residues" evidence="2">
    <location>
        <begin position="1120"/>
        <end position="1136"/>
    </location>
</feature>
<feature type="compositionally biased region" description="Low complexity" evidence="2">
    <location>
        <begin position="1143"/>
        <end position="1154"/>
    </location>
</feature>
<feature type="compositionally biased region" description="Acidic residues" evidence="2">
    <location>
        <begin position="1155"/>
        <end position="1170"/>
    </location>
</feature>
<feature type="compositionally biased region" description="Polar residues" evidence="2">
    <location>
        <begin position="1175"/>
        <end position="1187"/>
    </location>
</feature>
<feature type="compositionally biased region" description="Low complexity" evidence="2">
    <location>
        <begin position="1188"/>
        <end position="1198"/>
    </location>
</feature>
<feature type="compositionally biased region" description="Polar residues" evidence="2">
    <location>
        <begin position="1199"/>
        <end position="1209"/>
    </location>
</feature>